<proteinExistence type="evidence at transcript level"/>
<evidence type="ECO:0000250" key="1"/>
<evidence type="ECO:0000255" key="2">
    <source>
        <dbReference type="PROSITE-ProRule" id="PRU00159"/>
    </source>
</evidence>
<evidence type="ECO:0000255" key="3">
    <source>
        <dbReference type="PROSITE-ProRule" id="PRU10027"/>
    </source>
</evidence>
<comment type="function">
    <text evidence="1">Casein kinases are operationally defined by their preferential utilization of acidic proteins such as caseins as substrates. The alpha and alpha' chains contain the catalytic site. Participates in Wnt signaling (By similarity).</text>
</comment>
<comment type="catalytic activity">
    <reaction>
        <text>L-seryl-[protein] + ATP = O-phospho-L-seryl-[protein] + ADP + H(+)</text>
        <dbReference type="Rhea" id="RHEA:17989"/>
        <dbReference type="Rhea" id="RHEA-COMP:9863"/>
        <dbReference type="Rhea" id="RHEA-COMP:11604"/>
        <dbReference type="ChEBI" id="CHEBI:15378"/>
        <dbReference type="ChEBI" id="CHEBI:29999"/>
        <dbReference type="ChEBI" id="CHEBI:30616"/>
        <dbReference type="ChEBI" id="CHEBI:83421"/>
        <dbReference type="ChEBI" id="CHEBI:456216"/>
        <dbReference type="EC" id="2.7.11.1"/>
    </reaction>
</comment>
<comment type="catalytic activity">
    <reaction>
        <text>L-threonyl-[protein] + ATP = O-phospho-L-threonyl-[protein] + ADP + H(+)</text>
        <dbReference type="Rhea" id="RHEA:46608"/>
        <dbReference type="Rhea" id="RHEA-COMP:11060"/>
        <dbReference type="Rhea" id="RHEA-COMP:11605"/>
        <dbReference type="ChEBI" id="CHEBI:15378"/>
        <dbReference type="ChEBI" id="CHEBI:30013"/>
        <dbReference type="ChEBI" id="CHEBI:30616"/>
        <dbReference type="ChEBI" id="CHEBI:61977"/>
        <dbReference type="ChEBI" id="CHEBI:456216"/>
        <dbReference type="EC" id="2.7.11.1"/>
    </reaction>
</comment>
<comment type="subunit">
    <text>Tetramer composed of an alpha chain, an alpha' and two beta chains.</text>
</comment>
<comment type="similarity">
    <text evidence="2">Belongs to the protein kinase superfamily. Ser/Thr protein kinase family. CK2 subfamily.</text>
</comment>
<feature type="chain" id="PRO_0000085893" description="Casein kinase II subunit alpha'">
    <location>
        <begin position="1"/>
        <end position="350"/>
    </location>
</feature>
<feature type="domain" description="Protein kinase" evidence="2">
    <location>
        <begin position="40"/>
        <end position="325"/>
    </location>
</feature>
<feature type="active site" description="Proton acceptor" evidence="2 3">
    <location>
        <position position="157"/>
    </location>
</feature>
<feature type="binding site" evidence="2">
    <location>
        <begin position="46"/>
        <end position="54"/>
    </location>
    <ligand>
        <name>ATP</name>
        <dbReference type="ChEBI" id="CHEBI:30616"/>
    </ligand>
</feature>
<feature type="binding site" evidence="2">
    <location>
        <position position="69"/>
    </location>
    <ligand>
        <name>ATP</name>
        <dbReference type="ChEBI" id="CHEBI:30616"/>
    </ligand>
</feature>
<name>CSK22_CHICK</name>
<dbReference type="EC" id="2.7.11.1"/>
<dbReference type="EMBL" id="M59457">
    <property type="protein sequence ID" value="AAA48686.1"/>
    <property type="molecule type" value="mRNA"/>
</dbReference>
<dbReference type="PIR" id="B38611">
    <property type="entry name" value="B38611"/>
</dbReference>
<dbReference type="RefSeq" id="NP_001012709.1">
    <property type="nucleotide sequence ID" value="NM_001012691.2"/>
</dbReference>
<dbReference type="RefSeq" id="XP_015147776.1">
    <property type="nucleotide sequence ID" value="XM_015292290.4"/>
</dbReference>
<dbReference type="RefSeq" id="XP_046781346.1">
    <property type="nucleotide sequence ID" value="XM_046925390.1"/>
</dbReference>
<dbReference type="SMR" id="P21869"/>
<dbReference type="FunCoup" id="P21869">
    <property type="interactions" value="2580"/>
</dbReference>
<dbReference type="STRING" id="9031.ENSGALP00000066952"/>
<dbReference type="PaxDb" id="9031-ENSGALP00000001302"/>
<dbReference type="Ensembl" id="ENSGALT00010056458.1">
    <property type="protein sequence ID" value="ENSGALP00010034201.1"/>
    <property type="gene ID" value="ENSGALG00010023165.1"/>
</dbReference>
<dbReference type="GeneID" id="415626"/>
<dbReference type="KEGG" id="gga:415626"/>
<dbReference type="CTD" id="1459"/>
<dbReference type="VEuPathDB" id="HostDB:geneid_415626"/>
<dbReference type="eggNOG" id="KOG0668">
    <property type="taxonomic scope" value="Eukaryota"/>
</dbReference>
<dbReference type="GeneTree" id="ENSGT00390000004215"/>
<dbReference type="InParanoid" id="P21869"/>
<dbReference type="OMA" id="ACEKRPQ"/>
<dbReference type="OrthoDB" id="10254671at2759"/>
<dbReference type="PhylomeDB" id="P21869"/>
<dbReference type="TreeFam" id="TF300483"/>
<dbReference type="BRENDA" id="2.7.11.1">
    <property type="organism ID" value="1306"/>
</dbReference>
<dbReference type="Reactome" id="R-GGA-8939243">
    <property type="pathway name" value="RUNX1 interacts with co-factors whose precise effect on RUNX1 targets is not known"/>
</dbReference>
<dbReference type="PRO" id="PR:P21869"/>
<dbReference type="Proteomes" id="UP000000539">
    <property type="component" value="Chromosome 11"/>
</dbReference>
<dbReference type="Bgee" id="ENSGALG00000031718">
    <property type="expression patterns" value="Expressed in granulocyte and 13 other cell types or tissues"/>
</dbReference>
<dbReference type="GO" id="GO:0005829">
    <property type="term" value="C:cytosol"/>
    <property type="evidence" value="ECO:0000318"/>
    <property type="project" value="GO_Central"/>
</dbReference>
<dbReference type="GO" id="GO:0005634">
    <property type="term" value="C:nucleus"/>
    <property type="evidence" value="ECO:0000318"/>
    <property type="project" value="GO_Central"/>
</dbReference>
<dbReference type="GO" id="GO:0031519">
    <property type="term" value="C:PcG protein complex"/>
    <property type="evidence" value="ECO:0007669"/>
    <property type="project" value="Ensembl"/>
</dbReference>
<dbReference type="GO" id="GO:0005956">
    <property type="term" value="C:protein kinase CK2 complex"/>
    <property type="evidence" value="ECO:0000318"/>
    <property type="project" value="GO_Central"/>
</dbReference>
<dbReference type="GO" id="GO:0005524">
    <property type="term" value="F:ATP binding"/>
    <property type="evidence" value="ECO:0007669"/>
    <property type="project" value="UniProtKB-KW"/>
</dbReference>
<dbReference type="GO" id="GO:0106310">
    <property type="term" value="F:protein serine kinase activity"/>
    <property type="evidence" value="ECO:0007669"/>
    <property type="project" value="RHEA"/>
</dbReference>
<dbReference type="GO" id="GO:0004674">
    <property type="term" value="F:protein serine/threonine kinase activity"/>
    <property type="evidence" value="ECO:0000318"/>
    <property type="project" value="GO_Central"/>
</dbReference>
<dbReference type="GO" id="GO:0006974">
    <property type="term" value="P:DNA damage response"/>
    <property type="evidence" value="ECO:0000318"/>
    <property type="project" value="GO_Central"/>
</dbReference>
<dbReference type="GO" id="GO:0006302">
    <property type="term" value="P:double-strand break repair"/>
    <property type="evidence" value="ECO:0007669"/>
    <property type="project" value="Ensembl"/>
</dbReference>
<dbReference type="GO" id="GO:0032435">
    <property type="term" value="P:negative regulation of proteasomal ubiquitin-dependent protein catabolic process"/>
    <property type="evidence" value="ECO:0007669"/>
    <property type="project" value="Ensembl"/>
</dbReference>
<dbReference type="GO" id="GO:1905818">
    <property type="term" value="P:regulation of chromosome separation"/>
    <property type="evidence" value="ECO:0000318"/>
    <property type="project" value="GO_Central"/>
</dbReference>
<dbReference type="GO" id="GO:0007283">
    <property type="term" value="P:spermatogenesis"/>
    <property type="evidence" value="ECO:0007669"/>
    <property type="project" value="Ensembl"/>
</dbReference>
<dbReference type="GO" id="GO:0016055">
    <property type="term" value="P:Wnt signaling pathway"/>
    <property type="evidence" value="ECO:0007669"/>
    <property type="project" value="UniProtKB-KW"/>
</dbReference>
<dbReference type="CDD" id="cd14132">
    <property type="entry name" value="STKc_CK2_alpha"/>
    <property type="match status" value="1"/>
</dbReference>
<dbReference type="FunFam" id="1.10.510.10:FF:000059">
    <property type="entry name" value="Casein kinase II subunit alpha"/>
    <property type="match status" value="1"/>
</dbReference>
<dbReference type="FunFam" id="3.30.200.20:FF:000088">
    <property type="entry name" value="Casein kinase II subunit alpha"/>
    <property type="match status" value="1"/>
</dbReference>
<dbReference type="Gene3D" id="3.30.200.20">
    <property type="entry name" value="Phosphorylase Kinase, domain 1"/>
    <property type="match status" value="1"/>
</dbReference>
<dbReference type="Gene3D" id="1.10.510.10">
    <property type="entry name" value="Transferase(Phosphotransferase) domain 1"/>
    <property type="match status" value="1"/>
</dbReference>
<dbReference type="InterPro" id="IPR045216">
    <property type="entry name" value="CK2_alpha"/>
</dbReference>
<dbReference type="InterPro" id="IPR011009">
    <property type="entry name" value="Kinase-like_dom_sf"/>
</dbReference>
<dbReference type="InterPro" id="IPR000719">
    <property type="entry name" value="Prot_kinase_dom"/>
</dbReference>
<dbReference type="InterPro" id="IPR017441">
    <property type="entry name" value="Protein_kinase_ATP_BS"/>
</dbReference>
<dbReference type="InterPro" id="IPR008271">
    <property type="entry name" value="Ser/Thr_kinase_AS"/>
</dbReference>
<dbReference type="PANTHER" id="PTHR24054">
    <property type="entry name" value="CASEIN KINASE II SUBUNIT ALPHA"/>
    <property type="match status" value="1"/>
</dbReference>
<dbReference type="PANTHER" id="PTHR24054:SF34">
    <property type="entry name" value="CASEIN KINASE II SUBUNIT ALPHA"/>
    <property type="match status" value="1"/>
</dbReference>
<dbReference type="Pfam" id="PF00069">
    <property type="entry name" value="Pkinase"/>
    <property type="match status" value="1"/>
</dbReference>
<dbReference type="SMART" id="SM00220">
    <property type="entry name" value="S_TKc"/>
    <property type="match status" value="1"/>
</dbReference>
<dbReference type="SUPFAM" id="SSF56112">
    <property type="entry name" value="Protein kinase-like (PK-like)"/>
    <property type="match status" value="1"/>
</dbReference>
<dbReference type="PROSITE" id="PS00107">
    <property type="entry name" value="PROTEIN_KINASE_ATP"/>
    <property type="match status" value="1"/>
</dbReference>
<dbReference type="PROSITE" id="PS50011">
    <property type="entry name" value="PROTEIN_KINASE_DOM"/>
    <property type="match status" value="1"/>
</dbReference>
<dbReference type="PROSITE" id="PS00108">
    <property type="entry name" value="PROTEIN_KINASE_ST"/>
    <property type="match status" value="1"/>
</dbReference>
<sequence length="350" mass="41246">MPGPAAGSRARVYAEVNSLRSREYWDYEAHVPSWGNQDDYQLVRKLGRGKYSEVFEAINITNNERVVVKILKPVKKKKIKREVKILENLRGGTNIINLIDTVKDPVSKTPALVFEYINNTDFKQLYQILTDFDIRFYMYELLKALDYCHSMGIMHRDVKPHNVMIDHQQKKLRLIDWGLAEFYHPAQEYNVRVASRYFKGPELLVDYQMYDYSLDMWSLGCMLASMIFRKEPFFHGQDNYDQLVRIAKVLGTDELYGYLKKYHIELDPHFNDILGQHSRKRWENFIHSENRHLVSPEVLDLLDKLLRYDHQQRLTAKEAMEHPYFYPVVKEQSQPSSENAVLSSGLTTAR</sequence>
<keyword id="KW-0067">ATP-binding</keyword>
<keyword id="KW-0418">Kinase</keyword>
<keyword id="KW-0547">Nucleotide-binding</keyword>
<keyword id="KW-1185">Reference proteome</keyword>
<keyword id="KW-0723">Serine/threonine-protein kinase</keyword>
<keyword id="KW-0808">Transferase</keyword>
<keyword id="KW-0879">Wnt signaling pathway</keyword>
<reference key="1">
    <citation type="journal article" date="1991" name="J. Biol. Chem.">
        <title>Casein kinase II. cDNA sequences, developmental expression, and tissue distribution of mRNAs for alpha, alpha', and beta subunits of the chicken enzyme.</title>
        <authorList>
            <person name="Maridor G."/>
            <person name="Park W."/>
            <person name="Krek W."/>
            <person name="Nigg E.A."/>
        </authorList>
    </citation>
    <scope>NUCLEOTIDE SEQUENCE [MRNA]</scope>
</reference>
<accession>P21869</accession>
<organism>
    <name type="scientific">Gallus gallus</name>
    <name type="common">Chicken</name>
    <dbReference type="NCBI Taxonomy" id="9031"/>
    <lineage>
        <taxon>Eukaryota</taxon>
        <taxon>Metazoa</taxon>
        <taxon>Chordata</taxon>
        <taxon>Craniata</taxon>
        <taxon>Vertebrata</taxon>
        <taxon>Euteleostomi</taxon>
        <taxon>Archelosauria</taxon>
        <taxon>Archosauria</taxon>
        <taxon>Dinosauria</taxon>
        <taxon>Saurischia</taxon>
        <taxon>Theropoda</taxon>
        <taxon>Coelurosauria</taxon>
        <taxon>Aves</taxon>
        <taxon>Neognathae</taxon>
        <taxon>Galloanserae</taxon>
        <taxon>Galliformes</taxon>
        <taxon>Phasianidae</taxon>
        <taxon>Phasianinae</taxon>
        <taxon>Gallus</taxon>
    </lineage>
</organism>
<protein>
    <recommendedName>
        <fullName>Casein kinase II subunit alpha'</fullName>
        <shortName>CK II</shortName>
        <ecNumber>2.7.11.1</ecNumber>
    </recommendedName>
</protein>